<sequence length="546" mass="63487">MATTQAQIQRPIANFSPSLWGDQFIKNDPGAKAAEKHCKAVEELKKEVMNMITAAGSNLVEAMNLIDTLERLGISYHFEKEIDQKLKHFFNLNKDYSDESYDLYTVSLHFRLFRQHGHRISSDIFGRWIDESGKFKEGLKTDGKGLLSLYEASYLRTRGETILDDALEFATATLNSIAPHLESPLSKQVVHALIQPLHYGNPRIEAHNFISIYEENQDKNEFLLRFAKLDYNLLQMLHKEELNEVSRWWKELDLVSKLPYARDRVVECFFWAMGVYHEPQYSRARIMLTKTITMTSIIDDTYDAYGVIEELDIFTEAIERWNMEEMKKLPEYIQPFYKALLELYEQFEEELAEEGRSYAAHYAIESLKELVRSYHVEAKWFIQGYLPPFEEYLKNALITCTYCYHTTTSLLGVESAVEEDFEWLANKPKMLVAGLLICRVIDDIATYEVEKERGQSATGIESYMRDNNATIEEAVAKFFEIATDAWKDINEECLMPSPYSRDVLMRILNLERIIDVTYKGNEDGYTQPEKVLKPHIIALFVDPIKM</sequence>
<protein>
    <recommendedName>
        <fullName>(-)-5-epieremophilene synthase STPS1</fullName>
        <ecNumber evidence="2">4.2.3.199</ecNumber>
    </recommendedName>
    <alternativeName>
        <fullName evidence="3">Sesquiterpene synthase 1</fullName>
        <shortName evidence="3">SmSTPS1</shortName>
    </alternativeName>
</protein>
<proteinExistence type="evidence at protein level"/>
<dbReference type="EC" id="4.2.3.199" evidence="2"/>
<dbReference type="EMBL" id="KY432512">
    <property type="protein sequence ID" value="ARM19967.1"/>
    <property type="molecule type" value="mRNA"/>
</dbReference>
<dbReference type="SMR" id="A0A1W6GW32"/>
<dbReference type="KEGG" id="ag:ARM19967"/>
<dbReference type="BRENDA" id="4.2.3.199">
    <property type="organism ID" value="9850"/>
</dbReference>
<dbReference type="SABIO-RK" id="A0A1W6GW32"/>
<dbReference type="UniPathway" id="UPA00213"/>
<dbReference type="GO" id="GO:0000287">
    <property type="term" value="F:magnesium ion binding"/>
    <property type="evidence" value="ECO:0007669"/>
    <property type="project" value="InterPro"/>
</dbReference>
<dbReference type="GO" id="GO:0010333">
    <property type="term" value="F:terpene synthase activity"/>
    <property type="evidence" value="ECO:0000314"/>
    <property type="project" value="UniProtKB"/>
</dbReference>
<dbReference type="GO" id="GO:0016102">
    <property type="term" value="P:diterpenoid biosynthetic process"/>
    <property type="evidence" value="ECO:0007669"/>
    <property type="project" value="InterPro"/>
</dbReference>
<dbReference type="GO" id="GO:0016106">
    <property type="term" value="P:sesquiterpenoid biosynthetic process"/>
    <property type="evidence" value="ECO:0000314"/>
    <property type="project" value="UniProtKB"/>
</dbReference>
<dbReference type="CDD" id="cd00684">
    <property type="entry name" value="Terpene_cyclase_plant_C1"/>
    <property type="match status" value="1"/>
</dbReference>
<dbReference type="FunFam" id="1.10.600.10:FF:000007">
    <property type="entry name" value="Isoprene synthase, chloroplastic"/>
    <property type="match status" value="1"/>
</dbReference>
<dbReference type="FunFam" id="1.50.10.130:FF:000001">
    <property type="entry name" value="Isoprene synthase, chloroplastic"/>
    <property type="match status" value="1"/>
</dbReference>
<dbReference type="Gene3D" id="1.10.600.10">
    <property type="entry name" value="Farnesyl Diphosphate Synthase"/>
    <property type="match status" value="1"/>
</dbReference>
<dbReference type="Gene3D" id="1.50.10.130">
    <property type="entry name" value="Terpene synthase, N-terminal domain"/>
    <property type="match status" value="1"/>
</dbReference>
<dbReference type="InterPro" id="IPR008949">
    <property type="entry name" value="Isoprenoid_synthase_dom_sf"/>
</dbReference>
<dbReference type="InterPro" id="IPR034741">
    <property type="entry name" value="Terpene_cyclase-like_1_C"/>
</dbReference>
<dbReference type="InterPro" id="IPR044814">
    <property type="entry name" value="Terpene_cyclase_plant_C1"/>
</dbReference>
<dbReference type="InterPro" id="IPR001906">
    <property type="entry name" value="Terpene_synth_N"/>
</dbReference>
<dbReference type="InterPro" id="IPR036965">
    <property type="entry name" value="Terpene_synth_N_sf"/>
</dbReference>
<dbReference type="InterPro" id="IPR050148">
    <property type="entry name" value="Terpene_synthase-like"/>
</dbReference>
<dbReference type="InterPro" id="IPR005630">
    <property type="entry name" value="Terpene_synthase_metal-bd"/>
</dbReference>
<dbReference type="InterPro" id="IPR008930">
    <property type="entry name" value="Terpenoid_cyclase/PrenylTrfase"/>
</dbReference>
<dbReference type="PANTHER" id="PTHR31225:SF93">
    <property type="entry name" value="ALPHA-HUMULENE_(-)-(E)-BETA-CARYOPHYLLENE SYNTHASE"/>
    <property type="match status" value="1"/>
</dbReference>
<dbReference type="PANTHER" id="PTHR31225">
    <property type="entry name" value="OS04G0344100 PROTEIN-RELATED"/>
    <property type="match status" value="1"/>
</dbReference>
<dbReference type="Pfam" id="PF01397">
    <property type="entry name" value="Terpene_synth"/>
    <property type="match status" value="1"/>
</dbReference>
<dbReference type="Pfam" id="PF03936">
    <property type="entry name" value="Terpene_synth_C"/>
    <property type="match status" value="1"/>
</dbReference>
<dbReference type="SFLD" id="SFLDS00005">
    <property type="entry name" value="Isoprenoid_Synthase_Type_I"/>
    <property type="match status" value="1"/>
</dbReference>
<dbReference type="SFLD" id="SFLDG01019">
    <property type="entry name" value="Terpene_Cyclase_Like_1_C_Termi"/>
    <property type="match status" value="1"/>
</dbReference>
<dbReference type="SUPFAM" id="SSF48239">
    <property type="entry name" value="Terpenoid cyclases/Protein prenyltransferases"/>
    <property type="match status" value="1"/>
</dbReference>
<dbReference type="SUPFAM" id="SSF48576">
    <property type="entry name" value="Terpenoid synthases"/>
    <property type="match status" value="1"/>
</dbReference>
<keyword id="KW-0456">Lyase</keyword>
<keyword id="KW-0460">Magnesium</keyword>
<keyword id="KW-0479">Metal-binding</keyword>
<reference key="1">
    <citation type="journal article" date="2017" name="Front. Plant Sci.">
        <title>Identification of a novel (-)-5-epieremophilene synthase from Salvia miltiorrhiza via transcriptome mining.</title>
        <authorList>
            <person name="Fang X."/>
            <person name="Li C.Y."/>
            <person name="Yang Y."/>
            <person name="Cui M.Y."/>
            <person name="Chen X.Y."/>
            <person name="Yang L."/>
        </authorList>
    </citation>
    <scope>NUCLEOTIDE SEQUENCE [MRNA]</scope>
    <scope>FUNCTION</scope>
    <scope>CATALYTIC ACTIVITY</scope>
    <scope>BIOPHYSICOCHEMICAL PROPERTIES</scope>
    <scope>TISSUE SPECIFICITY</scope>
    <scope>INDUCTION</scope>
</reference>
<gene>
    <name evidence="3" type="primary">STPS1</name>
</gene>
<feature type="chain" id="PRO_0000447712" description="(-)-5-epieremophilene synthase STPS1">
    <location>
        <begin position="1"/>
        <end position="546"/>
    </location>
</feature>
<feature type="short sequence motif" description="DDXXD motif" evidence="4">
    <location>
        <begin position="299"/>
        <end position="303"/>
    </location>
</feature>
<feature type="binding site" evidence="1">
    <location>
        <position position="299"/>
    </location>
    <ligand>
        <name>Mg(2+)</name>
        <dbReference type="ChEBI" id="CHEBI:18420"/>
        <label>1</label>
    </ligand>
</feature>
<feature type="binding site" evidence="1">
    <location>
        <position position="299"/>
    </location>
    <ligand>
        <name>Mg(2+)</name>
        <dbReference type="ChEBI" id="CHEBI:18420"/>
        <label>2</label>
    </ligand>
</feature>
<feature type="binding site" evidence="1">
    <location>
        <position position="303"/>
    </location>
    <ligand>
        <name>Mg(2+)</name>
        <dbReference type="ChEBI" id="CHEBI:18420"/>
        <label>1</label>
    </ligand>
</feature>
<feature type="binding site" evidence="1">
    <location>
        <position position="303"/>
    </location>
    <ligand>
        <name>Mg(2+)</name>
        <dbReference type="ChEBI" id="CHEBI:18420"/>
        <label>2</label>
    </ligand>
</feature>
<feature type="binding site" evidence="1">
    <location>
        <position position="442"/>
    </location>
    <ligand>
        <name>Mg(2+)</name>
        <dbReference type="ChEBI" id="CHEBI:18420"/>
        <label>3</label>
    </ligand>
</feature>
<feature type="binding site" evidence="1">
    <location>
        <position position="446"/>
    </location>
    <ligand>
        <name>Mg(2+)</name>
        <dbReference type="ChEBI" id="CHEBI:18420"/>
        <label>3</label>
    </ligand>
</feature>
<feature type="binding site" evidence="1">
    <location>
        <position position="450"/>
    </location>
    <ligand>
        <name>Mg(2+)</name>
        <dbReference type="ChEBI" id="CHEBI:18420"/>
        <label>3</label>
    </ligand>
</feature>
<organism>
    <name type="scientific">Salvia miltiorrhiza</name>
    <name type="common">Chinese sage</name>
    <dbReference type="NCBI Taxonomy" id="226208"/>
    <lineage>
        <taxon>Eukaryota</taxon>
        <taxon>Viridiplantae</taxon>
        <taxon>Streptophyta</taxon>
        <taxon>Embryophyta</taxon>
        <taxon>Tracheophyta</taxon>
        <taxon>Spermatophyta</taxon>
        <taxon>Magnoliopsida</taxon>
        <taxon>eudicotyledons</taxon>
        <taxon>Gunneridae</taxon>
        <taxon>Pentapetalae</taxon>
        <taxon>asterids</taxon>
        <taxon>lamiids</taxon>
        <taxon>Lamiales</taxon>
        <taxon>Lamiaceae</taxon>
        <taxon>Nepetoideae</taxon>
        <taxon>Mentheae</taxon>
        <taxon>Salviinae</taxon>
        <taxon>Salvia</taxon>
        <taxon>Salvia incertae sedis</taxon>
    </lineage>
</organism>
<evidence type="ECO:0000250" key="1">
    <source>
        <dbReference type="UniProtKB" id="Q40577"/>
    </source>
</evidence>
<evidence type="ECO:0000269" key="2">
    <source>
    </source>
</evidence>
<evidence type="ECO:0000303" key="3">
    <source>
    </source>
</evidence>
<evidence type="ECO:0000305" key="4"/>
<name>STPS1_SALMI</name>
<accession>A0A1W6GW32</accession>
<comment type="function">
    <text evidence="2">Sesquiterpene synthase that catalyzes the conversion of farnesyl diphosphate to (-)-5-epi-eremophilene.</text>
</comment>
<comment type="catalytic activity">
    <reaction evidence="2">
        <text>(2E,6E)-farnesyl diphosphate = (-)-5-epi-eremophilene + diphosphate</text>
        <dbReference type="Rhea" id="RHEA:58168"/>
        <dbReference type="ChEBI" id="CHEBI:33019"/>
        <dbReference type="ChEBI" id="CHEBI:142537"/>
        <dbReference type="ChEBI" id="CHEBI:175763"/>
        <dbReference type="EC" id="4.2.3.199"/>
    </reaction>
    <physiologicalReaction direction="left-to-right" evidence="2">
        <dbReference type="Rhea" id="RHEA:58169"/>
    </physiologicalReaction>
</comment>
<comment type="cofactor">
    <cofactor evidence="1">
        <name>Mg(2+)</name>
        <dbReference type="ChEBI" id="CHEBI:18420"/>
    </cofactor>
    <text evidence="1">Binds 3 Mg(2+) ions per subunit.</text>
</comment>
<comment type="biophysicochemical properties">
    <kinetics>
        <KM evidence="2">25.35 uM for farnesyl diphosphate</KM>
        <text evidence="2">kcat is 2.09 sec(-1) with farnesyl diphosphate as substrate.</text>
    </kinetics>
</comment>
<comment type="pathway">
    <text evidence="4">Secondary metabolite biosynthesis; terpenoid biosynthesis.</text>
</comment>
<comment type="subunit">
    <text evidence="1">Monomer.</text>
</comment>
<comment type="tissue specificity">
    <text evidence="2">Highly expressed in leaves and at lower levels in flowers.</text>
</comment>
<comment type="induction">
    <text evidence="2">Induced by ethylene.</text>
</comment>
<comment type="domain">
    <text evidence="4">The Asp-Asp-Xaa-Xaa-Asp/Glu (DDXXD/E) motif is important for the catalytic activity, presumably through binding to Mg(2+).</text>
</comment>
<comment type="similarity">
    <text evidence="4">Belongs to the terpene synthase family. Tpsa subfamily.</text>
</comment>